<protein>
    <recommendedName>
        <fullName evidence="1">NADPH-dependent 7-cyano-7-deazaguanine reductase</fullName>
        <ecNumber evidence="1">1.7.1.13</ecNumber>
    </recommendedName>
    <alternativeName>
        <fullName evidence="1">7-cyano-7-carbaguanine reductase</fullName>
    </alternativeName>
    <alternativeName>
        <fullName evidence="1">NADPH-dependent nitrile oxidoreductase</fullName>
    </alternativeName>
    <alternativeName>
        <fullName evidence="1">PreQ(0) reductase</fullName>
    </alternativeName>
</protein>
<accession>C0RJF0</accession>
<sequence length="155" mass="17402">MSENTIYSGLKQLGSHTDIPLTPEEAVLERVANPQEGTPYCVRFTAPEFSSLCPMTGQPDFAHLVIDYVPGKWLVESKSLKLFLFSFRNHGAFHEDCTVTIGKRLVDLLEPEWLRIGGYWYPRGGIPIDVFYQTGAAPLNVWIPEQGVANYRGRG</sequence>
<evidence type="ECO:0000255" key="1">
    <source>
        <dbReference type="HAMAP-Rule" id="MF_00818"/>
    </source>
</evidence>
<organism>
    <name type="scientific">Brucella melitensis biotype 2 (strain ATCC 23457)</name>
    <dbReference type="NCBI Taxonomy" id="546272"/>
    <lineage>
        <taxon>Bacteria</taxon>
        <taxon>Pseudomonadati</taxon>
        <taxon>Pseudomonadota</taxon>
        <taxon>Alphaproteobacteria</taxon>
        <taxon>Hyphomicrobiales</taxon>
        <taxon>Brucellaceae</taxon>
        <taxon>Brucella/Ochrobactrum group</taxon>
        <taxon>Brucella</taxon>
    </lineage>
</organism>
<gene>
    <name evidence="1" type="primary">queF</name>
    <name type="ordered locus">BMEA_A1227</name>
</gene>
<keyword id="KW-0963">Cytoplasm</keyword>
<keyword id="KW-0521">NADP</keyword>
<keyword id="KW-0560">Oxidoreductase</keyword>
<keyword id="KW-0671">Queuosine biosynthesis</keyword>
<dbReference type="EC" id="1.7.1.13" evidence="1"/>
<dbReference type="EMBL" id="CP001488">
    <property type="protein sequence ID" value="ACO00958.1"/>
    <property type="molecule type" value="Genomic_DNA"/>
</dbReference>
<dbReference type="RefSeq" id="WP_002964310.1">
    <property type="nucleotide sequence ID" value="NC_012441.1"/>
</dbReference>
<dbReference type="SMR" id="C0RJF0"/>
<dbReference type="DNASU" id="3787830"/>
<dbReference type="GeneID" id="93016485"/>
<dbReference type="KEGG" id="bmi:BMEA_A1227"/>
<dbReference type="HOGENOM" id="CLU_102489_0_1_5"/>
<dbReference type="UniPathway" id="UPA00392"/>
<dbReference type="Proteomes" id="UP000001748">
    <property type="component" value="Chromosome I"/>
</dbReference>
<dbReference type="GO" id="GO:0005737">
    <property type="term" value="C:cytoplasm"/>
    <property type="evidence" value="ECO:0007669"/>
    <property type="project" value="UniProtKB-SubCell"/>
</dbReference>
<dbReference type="GO" id="GO:0033739">
    <property type="term" value="F:preQ1 synthase activity"/>
    <property type="evidence" value="ECO:0007669"/>
    <property type="project" value="UniProtKB-UniRule"/>
</dbReference>
<dbReference type="GO" id="GO:0008616">
    <property type="term" value="P:queuosine biosynthetic process"/>
    <property type="evidence" value="ECO:0007669"/>
    <property type="project" value="UniProtKB-UniRule"/>
</dbReference>
<dbReference type="GO" id="GO:0006400">
    <property type="term" value="P:tRNA modification"/>
    <property type="evidence" value="ECO:0007669"/>
    <property type="project" value="UniProtKB-UniRule"/>
</dbReference>
<dbReference type="Gene3D" id="3.30.1130.10">
    <property type="match status" value="1"/>
</dbReference>
<dbReference type="HAMAP" id="MF_00818">
    <property type="entry name" value="QueF_type1"/>
    <property type="match status" value="1"/>
</dbReference>
<dbReference type="InterPro" id="IPR043133">
    <property type="entry name" value="GTP-CH-I_C/QueF"/>
</dbReference>
<dbReference type="InterPro" id="IPR050084">
    <property type="entry name" value="NADPH_dep_7-cyano-7-deazaG_red"/>
</dbReference>
<dbReference type="InterPro" id="IPR029500">
    <property type="entry name" value="QueF"/>
</dbReference>
<dbReference type="InterPro" id="IPR016856">
    <property type="entry name" value="QueF_type1"/>
</dbReference>
<dbReference type="NCBIfam" id="TIGR03139">
    <property type="entry name" value="QueF-II"/>
    <property type="match status" value="1"/>
</dbReference>
<dbReference type="PANTHER" id="PTHR34354">
    <property type="entry name" value="NADPH-DEPENDENT 7-CYANO-7-DEAZAGUANINE REDUCTASE"/>
    <property type="match status" value="1"/>
</dbReference>
<dbReference type="PANTHER" id="PTHR34354:SF1">
    <property type="entry name" value="NADPH-DEPENDENT 7-CYANO-7-DEAZAGUANINE REDUCTASE"/>
    <property type="match status" value="1"/>
</dbReference>
<dbReference type="Pfam" id="PF14489">
    <property type="entry name" value="QueF"/>
    <property type="match status" value="1"/>
</dbReference>
<dbReference type="SUPFAM" id="SSF55620">
    <property type="entry name" value="Tetrahydrobiopterin biosynthesis enzymes-like"/>
    <property type="match status" value="1"/>
</dbReference>
<proteinExistence type="inferred from homology"/>
<feature type="chain" id="PRO_1000148668" description="NADPH-dependent 7-cyano-7-deazaguanine reductase">
    <location>
        <begin position="1"/>
        <end position="155"/>
    </location>
</feature>
<feature type="active site" description="Thioimide intermediate" evidence="1">
    <location>
        <position position="53"/>
    </location>
</feature>
<feature type="active site" description="Proton donor" evidence="1">
    <location>
        <position position="60"/>
    </location>
</feature>
<feature type="binding site" evidence="1">
    <location>
        <begin position="75"/>
        <end position="77"/>
    </location>
    <ligand>
        <name>substrate</name>
    </ligand>
</feature>
<feature type="binding site" evidence="1">
    <location>
        <begin position="94"/>
        <end position="95"/>
    </location>
    <ligand>
        <name>substrate</name>
    </ligand>
</feature>
<name>QUEF_BRUMB</name>
<comment type="function">
    <text evidence="1">Catalyzes the NADPH-dependent reduction of 7-cyano-7-deazaguanine (preQ0) to 7-aminomethyl-7-deazaguanine (preQ1).</text>
</comment>
<comment type="catalytic activity">
    <reaction evidence="1">
        <text>7-aminomethyl-7-carbaguanine + 2 NADP(+) = 7-cyano-7-deazaguanine + 2 NADPH + 3 H(+)</text>
        <dbReference type="Rhea" id="RHEA:13409"/>
        <dbReference type="ChEBI" id="CHEBI:15378"/>
        <dbReference type="ChEBI" id="CHEBI:45075"/>
        <dbReference type="ChEBI" id="CHEBI:57783"/>
        <dbReference type="ChEBI" id="CHEBI:58349"/>
        <dbReference type="ChEBI" id="CHEBI:58703"/>
        <dbReference type="EC" id="1.7.1.13"/>
    </reaction>
</comment>
<comment type="pathway">
    <text evidence="1">tRNA modification; tRNA-queuosine biosynthesis.</text>
</comment>
<comment type="subcellular location">
    <subcellularLocation>
        <location evidence="1">Cytoplasm</location>
    </subcellularLocation>
</comment>
<comment type="similarity">
    <text evidence="1">Belongs to the GTP cyclohydrolase I family. QueF type 1 subfamily.</text>
</comment>
<reference key="1">
    <citation type="submission" date="2009-03" db="EMBL/GenBank/DDBJ databases">
        <title>Brucella melitensis ATCC 23457 whole genome shotgun sequencing project.</title>
        <authorList>
            <person name="Setubal J.C."/>
            <person name="Boyle S."/>
            <person name="Crasta O.R."/>
            <person name="Gillespie J.J."/>
            <person name="Kenyon R.W."/>
            <person name="Lu J."/>
            <person name="Mane S."/>
            <person name="Nagrani S."/>
            <person name="Shallom J.M."/>
            <person name="Shallom S."/>
            <person name="Shukla M."/>
            <person name="Snyder E.E."/>
            <person name="Sobral B.W."/>
            <person name="Wattam A.R."/>
            <person name="Will R."/>
            <person name="Williams K."/>
            <person name="Yoo H."/>
            <person name="Munk C."/>
            <person name="Tapia R."/>
            <person name="Han C."/>
            <person name="Detter J.C."/>
            <person name="Bruce D."/>
            <person name="Brettin T.S."/>
        </authorList>
    </citation>
    <scope>NUCLEOTIDE SEQUENCE [LARGE SCALE GENOMIC DNA]</scope>
    <source>
        <strain>ATCC 23457</strain>
    </source>
</reference>